<name>METK_CHRSD</name>
<proteinExistence type="inferred from homology"/>
<protein>
    <recommendedName>
        <fullName evidence="1">S-adenosylmethionine synthase</fullName>
        <shortName evidence="1">AdoMet synthase</shortName>
        <ecNumber evidence="1">2.5.1.6</ecNumber>
    </recommendedName>
    <alternativeName>
        <fullName evidence="1">MAT</fullName>
    </alternativeName>
    <alternativeName>
        <fullName evidence="1">Methionine adenosyltransferase</fullName>
    </alternativeName>
</protein>
<sequence length="406" mass="44386">MNEYSLFTSESVSEGHPDKIADQISDAVLDAIIARDKQARVACETMVKTGVAIVAGEITTSAWVDLEDLVRRVINDIGYTSSDVGFDGNTCGVLNLIGKQSVDIAQGVDRSKPEDQGAGDQGLMFGYATNETDSYMPAPIHYSHRLVERQAELRKHGLLPWLRPDAKSQLTFRYDAQGKPCAVDAVVLSTQHDPDIDQDELREMVKREIIEEVIPAEWLTETTKYHINPTGNFVIGGPVGDCGLTGRKIIVDTYGGMARHGGGAFSGKDPSKVDRSAAYAGRYVAKNVVAAGLAERCEIQVSYAIGVAEPTSVSVDTFGTGKISDAKIVELVREHFDLRPNAITRMLDLLHPMYQLTAAYGHFGREPFETSYTWTDVGGKQHVETFTAFPWEKTDRADALRQAAGL</sequence>
<reference key="1">
    <citation type="journal article" date="2011" name="Stand. Genomic Sci.">
        <title>Complete genome sequence of the halophilic and highly halotolerant Chromohalobacter salexigens type strain (1H11(T)).</title>
        <authorList>
            <person name="Copeland A."/>
            <person name="O'Connor K."/>
            <person name="Lucas S."/>
            <person name="Lapidus A."/>
            <person name="Berry K.W."/>
            <person name="Detter J.C."/>
            <person name="Del Rio T.G."/>
            <person name="Hammon N."/>
            <person name="Dalin E."/>
            <person name="Tice H."/>
            <person name="Pitluck S."/>
            <person name="Bruce D."/>
            <person name="Goodwin L."/>
            <person name="Han C."/>
            <person name="Tapia R."/>
            <person name="Saunders E."/>
            <person name="Schmutz J."/>
            <person name="Brettin T."/>
            <person name="Larimer F."/>
            <person name="Land M."/>
            <person name="Hauser L."/>
            <person name="Vargas C."/>
            <person name="Nieto J.J."/>
            <person name="Kyrpides N.C."/>
            <person name="Ivanova N."/>
            <person name="Goker M."/>
            <person name="Klenk H.P."/>
            <person name="Csonka L.N."/>
            <person name="Woyke T."/>
        </authorList>
    </citation>
    <scope>NUCLEOTIDE SEQUENCE [LARGE SCALE GENOMIC DNA]</scope>
    <source>
        <strain>ATCC BAA-138 / DSM 3043 / CIP 106854 / NCIMB 13768 / 1H11</strain>
    </source>
</reference>
<evidence type="ECO:0000255" key="1">
    <source>
        <dbReference type="HAMAP-Rule" id="MF_00086"/>
    </source>
</evidence>
<accession>Q1R0L1</accession>
<feature type="chain" id="PRO_0000302904" description="S-adenosylmethionine synthase">
    <location>
        <begin position="1"/>
        <end position="406"/>
    </location>
</feature>
<feature type="region of interest" description="Flexible loop" evidence="1">
    <location>
        <begin position="100"/>
        <end position="110"/>
    </location>
</feature>
<feature type="binding site" description="in other chain" evidence="1">
    <location>
        <position position="16"/>
    </location>
    <ligand>
        <name>ATP</name>
        <dbReference type="ChEBI" id="CHEBI:30616"/>
        <note>ligand shared between two neighboring subunits</note>
    </ligand>
</feature>
<feature type="binding site" evidence="1">
    <location>
        <position position="18"/>
    </location>
    <ligand>
        <name>Mg(2+)</name>
        <dbReference type="ChEBI" id="CHEBI:18420"/>
    </ligand>
</feature>
<feature type="binding site" evidence="1">
    <location>
        <position position="44"/>
    </location>
    <ligand>
        <name>K(+)</name>
        <dbReference type="ChEBI" id="CHEBI:29103"/>
    </ligand>
</feature>
<feature type="binding site" description="in other chain" evidence="1">
    <location>
        <position position="57"/>
    </location>
    <ligand>
        <name>L-methionine</name>
        <dbReference type="ChEBI" id="CHEBI:57844"/>
        <note>ligand shared between two neighboring subunits</note>
    </ligand>
</feature>
<feature type="binding site" description="in other chain" evidence="1">
    <location>
        <position position="100"/>
    </location>
    <ligand>
        <name>L-methionine</name>
        <dbReference type="ChEBI" id="CHEBI:57844"/>
        <note>ligand shared between two neighboring subunits</note>
    </ligand>
</feature>
<feature type="binding site" description="in other chain" evidence="1">
    <location>
        <begin position="165"/>
        <end position="167"/>
    </location>
    <ligand>
        <name>ATP</name>
        <dbReference type="ChEBI" id="CHEBI:30616"/>
        <note>ligand shared between two neighboring subunits</note>
    </ligand>
</feature>
<feature type="binding site" evidence="1">
    <location>
        <position position="241"/>
    </location>
    <ligand>
        <name>ATP</name>
        <dbReference type="ChEBI" id="CHEBI:30616"/>
        <note>ligand shared between two neighboring subunits</note>
    </ligand>
</feature>
<feature type="binding site" evidence="1">
    <location>
        <position position="241"/>
    </location>
    <ligand>
        <name>L-methionine</name>
        <dbReference type="ChEBI" id="CHEBI:57844"/>
        <note>ligand shared between two neighboring subunits</note>
    </ligand>
</feature>
<feature type="binding site" description="in other chain" evidence="1">
    <location>
        <begin position="247"/>
        <end position="248"/>
    </location>
    <ligand>
        <name>ATP</name>
        <dbReference type="ChEBI" id="CHEBI:30616"/>
        <note>ligand shared between two neighboring subunits</note>
    </ligand>
</feature>
<feature type="binding site" evidence="1">
    <location>
        <position position="264"/>
    </location>
    <ligand>
        <name>ATP</name>
        <dbReference type="ChEBI" id="CHEBI:30616"/>
        <note>ligand shared between two neighboring subunits</note>
    </ligand>
</feature>
<feature type="binding site" evidence="1">
    <location>
        <position position="268"/>
    </location>
    <ligand>
        <name>ATP</name>
        <dbReference type="ChEBI" id="CHEBI:30616"/>
        <note>ligand shared between two neighboring subunits</note>
    </ligand>
</feature>
<feature type="binding site" description="in other chain" evidence="1">
    <location>
        <position position="272"/>
    </location>
    <ligand>
        <name>L-methionine</name>
        <dbReference type="ChEBI" id="CHEBI:57844"/>
        <note>ligand shared between two neighboring subunits</note>
    </ligand>
</feature>
<keyword id="KW-0067">ATP-binding</keyword>
<keyword id="KW-0963">Cytoplasm</keyword>
<keyword id="KW-0460">Magnesium</keyword>
<keyword id="KW-0479">Metal-binding</keyword>
<keyword id="KW-0547">Nucleotide-binding</keyword>
<keyword id="KW-0554">One-carbon metabolism</keyword>
<keyword id="KW-0630">Potassium</keyword>
<keyword id="KW-1185">Reference proteome</keyword>
<keyword id="KW-0808">Transferase</keyword>
<organism>
    <name type="scientific">Chromohalobacter salexigens (strain ATCC BAA-138 / DSM 3043 / CIP 106854 / NCIMB 13768 / 1H11)</name>
    <dbReference type="NCBI Taxonomy" id="290398"/>
    <lineage>
        <taxon>Bacteria</taxon>
        <taxon>Pseudomonadati</taxon>
        <taxon>Pseudomonadota</taxon>
        <taxon>Gammaproteobacteria</taxon>
        <taxon>Oceanospirillales</taxon>
        <taxon>Halomonadaceae</taxon>
        <taxon>Chromohalobacter</taxon>
    </lineage>
</organism>
<dbReference type="EC" id="2.5.1.6" evidence="1"/>
<dbReference type="EMBL" id="CP000285">
    <property type="protein sequence ID" value="ABE57747.1"/>
    <property type="molecule type" value="Genomic_DNA"/>
</dbReference>
<dbReference type="RefSeq" id="WP_011505693.1">
    <property type="nucleotide sequence ID" value="NC_007963.1"/>
</dbReference>
<dbReference type="SMR" id="Q1R0L1"/>
<dbReference type="STRING" id="290398.Csal_0385"/>
<dbReference type="GeneID" id="95333129"/>
<dbReference type="KEGG" id="csa:Csal_0385"/>
<dbReference type="eggNOG" id="COG0192">
    <property type="taxonomic scope" value="Bacteria"/>
</dbReference>
<dbReference type="HOGENOM" id="CLU_041802_1_1_6"/>
<dbReference type="OrthoDB" id="9801686at2"/>
<dbReference type="UniPathway" id="UPA00315">
    <property type="reaction ID" value="UER00080"/>
</dbReference>
<dbReference type="Proteomes" id="UP000000239">
    <property type="component" value="Chromosome"/>
</dbReference>
<dbReference type="GO" id="GO:0005737">
    <property type="term" value="C:cytoplasm"/>
    <property type="evidence" value="ECO:0007669"/>
    <property type="project" value="UniProtKB-SubCell"/>
</dbReference>
<dbReference type="GO" id="GO:0005524">
    <property type="term" value="F:ATP binding"/>
    <property type="evidence" value="ECO:0007669"/>
    <property type="project" value="UniProtKB-UniRule"/>
</dbReference>
<dbReference type="GO" id="GO:0000287">
    <property type="term" value="F:magnesium ion binding"/>
    <property type="evidence" value="ECO:0007669"/>
    <property type="project" value="UniProtKB-UniRule"/>
</dbReference>
<dbReference type="GO" id="GO:0004478">
    <property type="term" value="F:methionine adenosyltransferase activity"/>
    <property type="evidence" value="ECO:0007669"/>
    <property type="project" value="UniProtKB-UniRule"/>
</dbReference>
<dbReference type="GO" id="GO:0006730">
    <property type="term" value="P:one-carbon metabolic process"/>
    <property type="evidence" value="ECO:0007669"/>
    <property type="project" value="UniProtKB-KW"/>
</dbReference>
<dbReference type="GO" id="GO:0006556">
    <property type="term" value="P:S-adenosylmethionine biosynthetic process"/>
    <property type="evidence" value="ECO:0007669"/>
    <property type="project" value="UniProtKB-UniRule"/>
</dbReference>
<dbReference type="CDD" id="cd18079">
    <property type="entry name" value="S-AdoMet_synt"/>
    <property type="match status" value="1"/>
</dbReference>
<dbReference type="FunFam" id="3.30.300.10:FF:000003">
    <property type="entry name" value="S-adenosylmethionine synthase"/>
    <property type="match status" value="1"/>
</dbReference>
<dbReference type="Gene3D" id="3.30.300.10">
    <property type="match status" value="3"/>
</dbReference>
<dbReference type="HAMAP" id="MF_00086">
    <property type="entry name" value="S_AdoMet_synth1"/>
    <property type="match status" value="1"/>
</dbReference>
<dbReference type="InterPro" id="IPR022631">
    <property type="entry name" value="ADOMET_SYNTHASE_CS"/>
</dbReference>
<dbReference type="InterPro" id="IPR022630">
    <property type="entry name" value="S-AdoMet_synt_C"/>
</dbReference>
<dbReference type="InterPro" id="IPR022629">
    <property type="entry name" value="S-AdoMet_synt_central"/>
</dbReference>
<dbReference type="InterPro" id="IPR022628">
    <property type="entry name" value="S-AdoMet_synt_N"/>
</dbReference>
<dbReference type="InterPro" id="IPR002133">
    <property type="entry name" value="S-AdoMet_synthetase"/>
</dbReference>
<dbReference type="InterPro" id="IPR022636">
    <property type="entry name" value="S-AdoMet_synthetase_sfam"/>
</dbReference>
<dbReference type="NCBIfam" id="TIGR01034">
    <property type="entry name" value="metK"/>
    <property type="match status" value="1"/>
</dbReference>
<dbReference type="PANTHER" id="PTHR11964">
    <property type="entry name" value="S-ADENOSYLMETHIONINE SYNTHETASE"/>
    <property type="match status" value="1"/>
</dbReference>
<dbReference type="Pfam" id="PF02773">
    <property type="entry name" value="S-AdoMet_synt_C"/>
    <property type="match status" value="1"/>
</dbReference>
<dbReference type="Pfam" id="PF02772">
    <property type="entry name" value="S-AdoMet_synt_M"/>
    <property type="match status" value="1"/>
</dbReference>
<dbReference type="Pfam" id="PF00438">
    <property type="entry name" value="S-AdoMet_synt_N"/>
    <property type="match status" value="1"/>
</dbReference>
<dbReference type="PIRSF" id="PIRSF000497">
    <property type="entry name" value="MAT"/>
    <property type="match status" value="1"/>
</dbReference>
<dbReference type="SUPFAM" id="SSF55973">
    <property type="entry name" value="S-adenosylmethionine synthetase"/>
    <property type="match status" value="3"/>
</dbReference>
<dbReference type="PROSITE" id="PS00376">
    <property type="entry name" value="ADOMET_SYNTHASE_1"/>
    <property type="match status" value="1"/>
</dbReference>
<dbReference type="PROSITE" id="PS00377">
    <property type="entry name" value="ADOMET_SYNTHASE_2"/>
    <property type="match status" value="1"/>
</dbReference>
<comment type="function">
    <text evidence="1">Catalyzes the formation of S-adenosylmethionine (AdoMet) from methionine and ATP. The overall synthetic reaction is composed of two sequential steps, AdoMet formation and the subsequent tripolyphosphate hydrolysis which occurs prior to release of AdoMet from the enzyme.</text>
</comment>
<comment type="catalytic activity">
    <reaction evidence="1">
        <text>L-methionine + ATP + H2O = S-adenosyl-L-methionine + phosphate + diphosphate</text>
        <dbReference type="Rhea" id="RHEA:21080"/>
        <dbReference type="ChEBI" id="CHEBI:15377"/>
        <dbReference type="ChEBI" id="CHEBI:30616"/>
        <dbReference type="ChEBI" id="CHEBI:33019"/>
        <dbReference type="ChEBI" id="CHEBI:43474"/>
        <dbReference type="ChEBI" id="CHEBI:57844"/>
        <dbReference type="ChEBI" id="CHEBI:59789"/>
        <dbReference type="EC" id="2.5.1.6"/>
    </reaction>
</comment>
<comment type="cofactor">
    <cofactor evidence="1">
        <name>Mg(2+)</name>
        <dbReference type="ChEBI" id="CHEBI:18420"/>
    </cofactor>
    <text evidence="1">Binds 2 divalent ions per subunit.</text>
</comment>
<comment type="cofactor">
    <cofactor evidence="1">
        <name>K(+)</name>
        <dbReference type="ChEBI" id="CHEBI:29103"/>
    </cofactor>
    <text evidence="1">Binds 1 potassium ion per subunit.</text>
</comment>
<comment type="pathway">
    <text evidence="1">Amino-acid biosynthesis; S-adenosyl-L-methionine biosynthesis; S-adenosyl-L-methionine from L-methionine: step 1/1.</text>
</comment>
<comment type="subunit">
    <text evidence="1">Homotetramer; dimer of dimers.</text>
</comment>
<comment type="subcellular location">
    <subcellularLocation>
        <location evidence="1">Cytoplasm</location>
    </subcellularLocation>
</comment>
<comment type="similarity">
    <text evidence="1">Belongs to the AdoMet synthase family.</text>
</comment>
<gene>
    <name evidence="1" type="primary">metK</name>
    <name type="ordered locus">Csal_0385</name>
</gene>